<accession>O80630</accession>
<sequence length="322" mass="33762">MAKALHITIFLFLISSNLLAFINSARLLDEIQPQPQLVPTGQIPTVAPTEAEEEDGTDDNPGLATTTTTASAVTVPAGPAEATEPLLEFFMHDVLGGSHPSARVVTGIVAQTEVNGIPFSKASNSIFPVDNGVPLVNSNNINSVINPNTAPLLTGLGGAQTSTVIQNTNGNSNDALSANSLPFVTAGNLPPGAALQHLMFGTITVVDDELTESHELGSAVIGRAQGFYLASSLDGTSQTLSLTVLLHGEHDQHDTLDDAISFFGVHRTASHASQIAVIGGTGKFEHAKGYAIVETLHNQDNQHITDGQDTILHFSVYLTYKA</sequence>
<feature type="signal peptide" evidence="2">
    <location>
        <begin position="1"/>
        <end position="20"/>
    </location>
</feature>
<feature type="chain" id="PRO_0000422840" description="Dirigent protein 9">
    <location>
        <begin position="21"/>
        <end position="322"/>
    </location>
</feature>
<dbReference type="EMBL" id="AC004218">
    <property type="protein sequence ID" value="AAC27834.1"/>
    <property type="molecule type" value="Genomic_DNA"/>
</dbReference>
<dbReference type="EMBL" id="CP002685">
    <property type="protein sequence ID" value="AEC09674.1"/>
    <property type="molecule type" value="Genomic_DNA"/>
</dbReference>
<dbReference type="EMBL" id="BT010722">
    <property type="protein sequence ID" value="AAR20779.1"/>
    <property type="molecule type" value="mRNA"/>
</dbReference>
<dbReference type="EMBL" id="BT011589">
    <property type="protein sequence ID" value="AAS46642.1"/>
    <property type="molecule type" value="mRNA"/>
</dbReference>
<dbReference type="PIR" id="T00553">
    <property type="entry name" value="T00553"/>
</dbReference>
<dbReference type="RefSeq" id="NP_181475.1">
    <property type="nucleotide sequence ID" value="NM_129501.3"/>
</dbReference>
<dbReference type="SMR" id="O80630"/>
<dbReference type="FunCoup" id="O80630">
    <property type="interactions" value="226"/>
</dbReference>
<dbReference type="STRING" id="3702.O80630"/>
<dbReference type="GlyGen" id="O80630">
    <property type="glycosylation" value="1 site"/>
</dbReference>
<dbReference type="PaxDb" id="3702-AT2G39430.1"/>
<dbReference type="ProteomicsDB" id="224124"/>
<dbReference type="EnsemblPlants" id="AT2G39430.1">
    <property type="protein sequence ID" value="AT2G39430.1"/>
    <property type="gene ID" value="AT2G39430"/>
</dbReference>
<dbReference type="GeneID" id="818528"/>
<dbReference type="Gramene" id="AT2G39430.1">
    <property type="protein sequence ID" value="AT2G39430.1"/>
    <property type="gene ID" value="AT2G39430"/>
</dbReference>
<dbReference type="KEGG" id="ath:AT2G39430"/>
<dbReference type="Araport" id="AT2G39430"/>
<dbReference type="TAIR" id="AT2G39430"/>
<dbReference type="eggNOG" id="ENOG502QQZX">
    <property type="taxonomic scope" value="Eukaryota"/>
</dbReference>
<dbReference type="HOGENOM" id="CLU_059816_0_1_1"/>
<dbReference type="InParanoid" id="O80630"/>
<dbReference type="OMA" id="AHHITIL"/>
<dbReference type="PhylomeDB" id="O80630"/>
<dbReference type="PRO" id="PR:O80630"/>
<dbReference type="Proteomes" id="UP000006548">
    <property type="component" value="Chromosome 2"/>
</dbReference>
<dbReference type="ExpressionAtlas" id="O80630">
    <property type="expression patterns" value="baseline and differential"/>
</dbReference>
<dbReference type="GO" id="GO:0048046">
    <property type="term" value="C:apoplast"/>
    <property type="evidence" value="ECO:0007669"/>
    <property type="project" value="UniProtKB-SubCell"/>
</dbReference>
<dbReference type="GO" id="GO:0009699">
    <property type="term" value="P:phenylpropanoid biosynthetic process"/>
    <property type="evidence" value="ECO:0007669"/>
    <property type="project" value="UniProtKB-ARBA"/>
</dbReference>
<dbReference type="Gene3D" id="2.40.480.10">
    <property type="entry name" value="Allene oxide cyclase-like"/>
    <property type="match status" value="1"/>
</dbReference>
<dbReference type="InterPro" id="IPR044859">
    <property type="entry name" value="Allene_oxi_cyc_Dirigent"/>
</dbReference>
<dbReference type="InterPro" id="IPR004265">
    <property type="entry name" value="Dirigent"/>
</dbReference>
<dbReference type="PANTHER" id="PTHR46215">
    <property type="entry name" value="DIRIGENT PROTEIN 24-RELATED"/>
    <property type="match status" value="1"/>
</dbReference>
<dbReference type="PANTHER" id="PTHR46215:SF6">
    <property type="entry name" value="DIRIGENT PROTEIN 9"/>
    <property type="match status" value="1"/>
</dbReference>
<dbReference type="Pfam" id="PF03018">
    <property type="entry name" value="Dirigent"/>
    <property type="match status" value="1"/>
</dbReference>
<reference key="1">
    <citation type="journal article" date="1999" name="Nature">
        <title>Sequence and analysis of chromosome 2 of the plant Arabidopsis thaliana.</title>
        <authorList>
            <person name="Lin X."/>
            <person name="Kaul S."/>
            <person name="Rounsley S.D."/>
            <person name="Shea T.P."/>
            <person name="Benito M.-I."/>
            <person name="Town C.D."/>
            <person name="Fujii C.Y."/>
            <person name="Mason T.M."/>
            <person name="Bowman C.L."/>
            <person name="Barnstead M.E."/>
            <person name="Feldblyum T.V."/>
            <person name="Buell C.R."/>
            <person name="Ketchum K.A."/>
            <person name="Lee J.J."/>
            <person name="Ronning C.M."/>
            <person name="Koo H.L."/>
            <person name="Moffat K.S."/>
            <person name="Cronin L.A."/>
            <person name="Shen M."/>
            <person name="Pai G."/>
            <person name="Van Aken S."/>
            <person name="Umayam L."/>
            <person name="Tallon L.J."/>
            <person name="Gill J.E."/>
            <person name="Adams M.D."/>
            <person name="Carrera A.J."/>
            <person name="Creasy T.H."/>
            <person name="Goodman H.M."/>
            <person name="Somerville C.R."/>
            <person name="Copenhaver G.P."/>
            <person name="Preuss D."/>
            <person name="Nierman W.C."/>
            <person name="White O."/>
            <person name="Eisen J.A."/>
            <person name="Salzberg S.L."/>
            <person name="Fraser C.M."/>
            <person name="Venter J.C."/>
        </authorList>
    </citation>
    <scope>NUCLEOTIDE SEQUENCE [LARGE SCALE GENOMIC DNA]</scope>
    <source>
        <strain>cv. Columbia</strain>
    </source>
</reference>
<reference key="2">
    <citation type="journal article" date="2017" name="Plant J.">
        <title>Araport11: a complete reannotation of the Arabidopsis thaliana reference genome.</title>
        <authorList>
            <person name="Cheng C.Y."/>
            <person name="Krishnakumar V."/>
            <person name="Chan A.P."/>
            <person name="Thibaud-Nissen F."/>
            <person name="Schobel S."/>
            <person name="Town C.D."/>
        </authorList>
    </citation>
    <scope>GENOME REANNOTATION</scope>
    <source>
        <strain>cv. Columbia</strain>
    </source>
</reference>
<reference key="3">
    <citation type="submission" date="2004-02" db="EMBL/GenBank/DDBJ databases">
        <title>Arabidopsis ORF clones.</title>
        <authorList>
            <person name="Shinn P."/>
            <person name="Chen H."/>
            <person name="Cheuk R.F."/>
            <person name="Kim C.J."/>
            <person name="Ecker J.R."/>
        </authorList>
    </citation>
    <scope>NUCLEOTIDE SEQUENCE [LARGE SCALE MRNA]</scope>
    <source>
        <strain>cv. Columbia</strain>
    </source>
</reference>
<reference key="4">
    <citation type="journal article" date="2007" name="Phytochemistry">
        <title>Dirigent proteins in conifer defense II: Extended gene discovery, phylogeny, and constitutive and stress-induced gene expression in spruce (Picea spp.).</title>
        <authorList>
            <person name="Ralph S.G."/>
            <person name="Jancsik S."/>
            <person name="Bohlmann J."/>
        </authorList>
    </citation>
    <scope>GENE FAMILY</scope>
    <scope>NOMENCLATURE</scope>
</reference>
<evidence type="ECO:0000250" key="1"/>
<evidence type="ECO:0000255" key="2"/>
<evidence type="ECO:0000305" key="3"/>
<gene>
    <name type="primary">DIR9</name>
    <name type="ordered locus">At2g39430</name>
    <name type="ORF">F12L6.9</name>
</gene>
<comment type="function">
    <text evidence="1">Dirigent proteins impart stereoselectivity on the phenoxy radical-coupling reaction, yielding optically active lignans from two molecules of coniferyl alcohol in the biosynthesis of lignans, flavonolignans, and alkaloids and thus plays a central role in plant secondary metabolism.</text>
</comment>
<comment type="subunit">
    <text evidence="1">Homodimer.</text>
</comment>
<comment type="subcellular location">
    <subcellularLocation>
        <location evidence="1">Secreted</location>
        <location evidence="1">Extracellular space</location>
        <location evidence="1">Apoplast</location>
    </subcellularLocation>
</comment>
<comment type="similarity">
    <text evidence="3">Belongs to the plant dirigent protein family.</text>
</comment>
<name>DIR9_ARATH</name>
<protein>
    <recommendedName>
        <fullName>Dirigent protein 9</fullName>
        <shortName>AtDIR9</shortName>
    </recommendedName>
</protein>
<keyword id="KW-0052">Apoplast</keyword>
<keyword id="KW-1185">Reference proteome</keyword>
<keyword id="KW-0964">Secreted</keyword>
<keyword id="KW-0732">Signal</keyword>
<proteinExistence type="evidence at transcript level"/>
<organism>
    <name type="scientific">Arabidopsis thaliana</name>
    <name type="common">Mouse-ear cress</name>
    <dbReference type="NCBI Taxonomy" id="3702"/>
    <lineage>
        <taxon>Eukaryota</taxon>
        <taxon>Viridiplantae</taxon>
        <taxon>Streptophyta</taxon>
        <taxon>Embryophyta</taxon>
        <taxon>Tracheophyta</taxon>
        <taxon>Spermatophyta</taxon>
        <taxon>Magnoliopsida</taxon>
        <taxon>eudicotyledons</taxon>
        <taxon>Gunneridae</taxon>
        <taxon>Pentapetalae</taxon>
        <taxon>rosids</taxon>
        <taxon>malvids</taxon>
        <taxon>Brassicales</taxon>
        <taxon>Brassicaceae</taxon>
        <taxon>Camelineae</taxon>
        <taxon>Arabidopsis</taxon>
    </lineage>
</organism>